<feature type="chain" id="PRO_0000099964" description="Ferredoxin oxidoreductase 1 subunit ForD">
    <location>
        <begin position="1"/>
        <end position="79"/>
    </location>
</feature>
<feature type="domain" description="4Fe-4S ferredoxin-type 1" evidence="3">
    <location>
        <begin position="3"/>
        <end position="35"/>
    </location>
</feature>
<feature type="domain" description="4Fe-4S ferredoxin-type 2" evidence="3">
    <location>
        <begin position="37"/>
        <end position="65"/>
    </location>
</feature>
<feature type="binding site" evidence="2">
    <location>
        <position position="12"/>
    </location>
    <ligand>
        <name>[4Fe-4S] cluster</name>
        <dbReference type="ChEBI" id="CHEBI:49883"/>
        <label>1</label>
    </ligand>
</feature>
<feature type="binding site" evidence="2">
    <location>
        <position position="17"/>
    </location>
    <ligand>
        <name>[4Fe-4S] cluster</name>
        <dbReference type="ChEBI" id="CHEBI:49883"/>
        <label>1</label>
    </ligand>
</feature>
<feature type="binding site" evidence="2">
    <location>
        <position position="20"/>
    </location>
    <ligand>
        <name>[4Fe-4S] cluster</name>
        <dbReference type="ChEBI" id="CHEBI:49883"/>
        <label>1</label>
    </ligand>
</feature>
<feature type="binding site" evidence="2">
    <location>
        <position position="24"/>
    </location>
    <ligand>
        <name>[4Fe-4S] cluster</name>
        <dbReference type="ChEBI" id="CHEBI:49883"/>
        <label>2</label>
    </ligand>
</feature>
<feature type="binding site" evidence="2">
    <location>
        <position position="46"/>
    </location>
    <ligand>
        <name>[4Fe-4S] cluster</name>
        <dbReference type="ChEBI" id="CHEBI:49883"/>
        <label>2</label>
    </ligand>
</feature>
<feature type="binding site" evidence="2">
    <location>
        <position position="49"/>
    </location>
    <ligand>
        <name>[4Fe-4S] cluster</name>
        <dbReference type="ChEBI" id="CHEBI:49883"/>
        <label>2</label>
    </ligand>
</feature>
<feature type="binding site" evidence="2">
    <location>
        <position position="52"/>
    </location>
    <ligand>
        <name>[4Fe-4S] cluster</name>
        <dbReference type="ChEBI" id="CHEBI:49883"/>
        <label>2</label>
    </ligand>
</feature>
<feature type="binding site" evidence="2">
    <location>
        <position position="56"/>
    </location>
    <ligand>
        <name>[4Fe-4S] cluster</name>
        <dbReference type="ChEBI" id="CHEBI:49883"/>
        <label>1</label>
    </ligand>
</feature>
<gene>
    <name type="primary">forD1</name>
    <name type="synonym">fdx3</name>
    <name type="ordered locus">aq_1191.1</name>
    <name type="ORF">aq_1192A</name>
</gene>
<evidence type="ECO:0000250" key="1"/>
<evidence type="ECO:0000255" key="2"/>
<evidence type="ECO:0000255" key="3">
    <source>
        <dbReference type="PROSITE-ProRule" id="PRU00711"/>
    </source>
</evidence>
<proteinExistence type="inferred from homology"/>
<protein>
    <recommendedName>
        <fullName>Ferredoxin oxidoreductase 1 subunit ForD</fullName>
        <ecNumber>1.-.-.-</ecNumber>
    </recommendedName>
    <alternativeName>
        <fullName>Ferredoxin oxidoreductase 1 subunit delta</fullName>
    </alternativeName>
</protein>
<keyword id="KW-0004">4Fe-4S</keyword>
<keyword id="KW-0249">Electron transport</keyword>
<keyword id="KW-0408">Iron</keyword>
<keyword id="KW-0411">Iron-sulfur</keyword>
<keyword id="KW-0479">Metal-binding</keyword>
<keyword id="KW-0560">Oxidoreductase</keyword>
<keyword id="KW-1185">Reference proteome</keyword>
<keyword id="KW-0677">Repeat</keyword>
<keyword id="KW-0813">Transport</keyword>
<name>FORD1_AQUAE</name>
<dbReference type="EC" id="1.-.-.-"/>
<dbReference type="EMBL" id="AE000657">
    <property type="protein sequence ID" value="AAC07215.1"/>
    <property type="molecule type" value="Genomic_DNA"/>
</dbReference>
<dbReference type="PIR" id="H70402">
    <property type="entry name" value="H70402"/>
</dbReference>
<dbReference type="RefSeq" id="NP_213815.1">
    <property type="nucleotide sequence ID" value="NC_000918.1"/>
</dbReference>
<dbReference type="RefSeq" id="WP_010880753.1">
    <property type="nucleotide sequence ID" value="NC_000918.1"/>
</dbReference>
<dbReference type="SMR" id="O67251"/>
<dbReference type="STRING" id="224324.aq_1192a"/>
<dbReference type="EnsemblBacteria" id="AAC07215">
    <property type="protein sequence ID" value="AAC07215"/>
    <property type="gene ID" value="aq_1192a"/>
</dbReference>
<dbReference type="KEGG" id="aae:aq_1192a"/>
<dbReference type="PATRIC" id="fig|224324.8.peg.928"/>
<dbReference type="eggNOG" id="COG1144">
    <property type="taxonomic scope" value="Bacteria"/>
</dbReference>
<dbReference type="HOGENOM" id="CLU_175364_0_0_0"/>
<dbReference type="InParanoid" id="O67251"/>
<dbReference type="OrthoDB" id="9794954at2"/>
<dbReference type="Proteomes" id="UP000000798">
    <property type="component" value="Chromosome"/>
</dbReference>
<dbReference type="GO" id="GO:0051539">
    <property type="term" value="F:4 iron, 4 sulfur cluster binding"/>
    <property type="evidence" value="ECO:0007669"/>
    <property type="project" value="UniProtKB-KW"/>
</dbReference>
<dbReference type="GO" id="GO:0046872">
    <property type="term" value="F:metal ion binding"/>
    <property type="evidence" value="ECO:0007669"/>
    <property type="project" value="UniProtKB-KW"/>
</dbReference>
<dbReference type="GO" id="GO:0016491">
    <property type="term" value="F:oxidoreductase activity"/>
    <property type="evidence" value="ECO:0007669"/>
    <property type="project" value="UniProtKB-KW"/>
</dbReference>
<dbReference type="Gene3D" id="3.30.70.20">
    <property type="match status" value="1"/>
</dbReference>
<dbReference type="InterPro" id="IPR017896">
    <property type="entry name" value="4Fe4S_Fe-S-bd"/>
</dbReference>
<dbReference type="Pfam" id="PF13237">
    <property type="entry name" value="Fer4_10"/>
    <property type="match status" value="1"/>
</dbReference>
<dbReference type="SUPFAM" id="SSF54862">
    <property type="entry name" value="4Fe-4S ferredoxins"/>
    <property type="match status" value="1"/>
</dbReference>
<dbReference type="PROSITE" id="PS51379">
    <property type="entry name" value="4FE4S_FER_2"/>
    <property type="match status" value="2"/>
</dbReference>
<reference key="1">
    <citation type="journal article" date="1998" name="Nature">
        <title>The complete genome of the hyperthermophilic bacterium Aquifex aeolicus.</title>
        <authorList>
            <person name="Deckert G."/>
            <person name="Warren P.V."/>
            <person name="Gaasterland T."/>
            <person name="Young W.G."/>
            <person name="Lenox A.L."/>
            <person name="Graham D.E."/>
            <person name="Overbeek R."/>
            <person name="Snead M.A."/>
            <person name="Keller M."/>
            <person name="Aujay M."/>
            <person name="Huber R."/>
            <person name="Feldman R.A."/>
            <person name="Short J.M."/>
            <person name="Olsen G.J."/>
            <person name="Swanson R.V."/>
        </authorList>
    </citation>
    <scope>NUCLEOTIDE SEQUENCE [LARGE SCALE GENOMIC DNA]</scope>
    <source>
        <strain>VF5</strain>
    </source>
</reference>
<sequence length="79" mass="9099">MYYVAQVIKDECSKYNCKQCTLFCPEPNTLMYTDEGHHAYVNTLRCKGCALCVYVCSELLKRDSIEMVYAENRDVAGVR</sequence>
<organism>
    <name type="scientific">Aquifex aeolicus (strain VF5)</name>
    <dbReference type="NCBI Taxonomy" id="224324"/>
    <lineage>
        <taxon>Bacteria</taxon>
        <taxon>Pseudomonadati</taxon>
        <taxon>Aquificota</taxon>
        <taxon>Aquificia</taxon>
        <taxon>Aquificales</taxon>
        <taxon>Aquificaceae</taxon>
        <taxon>Aquifex</taxon>
    </lineage>
</organism>
<comment type="cofactor">
    <cofactor evidence="1">
        <name>[4Fe-4S] cluster</name>
        <dbReference type="ChEBI" id="CHEBI:49883"/>
    </cofactor>
    <text evidence="1">Binds 2 [4Fe-4S] clusters.</text>
</comment>
<comment type="subunit">
    <text evidence="1">Heterotetramer of one alpha, one beta, one delta and one gamma chain.</text>
</comment>
<accession>O67251</accession>